<keyword id="KW-0067">ATP-binding</keyword>
<keyword id="KW-0963">Cytoplasm</keyword>
<keyword id="KW-0235">DNA replication</keyword>
<keyword id="KW-0238">DNA-binding</keyword>
<keyword id="KW-0446">Lipid-binding</keyword>
<keyword id="KW-0547">Nucleotide-binding</keyword>
<name>DNAA_SPICI</name>
<evidence type="ECO:0000255" key="1">
    <source>
        <dbReference type="HAMAP-Rule" id="MF_00377"/>
    </source>
</evidence>
<feature type="chain" id="PRO_0000114257" description="Chromosomal replication initiator protein DnaA">
    <location>
        <begin position="1"/>
        <end position="450"/>
    </location>
</feature>
<feature type="region of interest" description="Domain I, interacts with DnaA modulators" evidence="1">
    <location>
        <begin position="1"/>
        <end position="73"/>
    </location>
</feature>
<feature type="region of interest" description="Domain II" evidence="1">
    <location>
        <begin position="73"/>
        <end position="104"/>
    </location>
</feature>
<feature type="region of interest" description="Domain III, AAA+ region" evidence="1">
    <location>
        <begin position="105"/>
        <end position="326"/>
    </location>
</feature>
<feature type="region of interest" description="Domain IV, binds dsDNA" evidence="1">
    <location>
        <begin position="327"/>
        <end position="450"/>
    </location>
</feature>
<feature type="binding site" evidence="1">
    <location>
        <position position="149"/>
    </location>
    <ligand>
        <name>ATP</name>
        <dbReference type="ChEBI" id="CHEBI:30616"/>
    </ligand>
</feature>
<feature type="binding site" evidence="1">
    <location>
        <position position="151"/>
    </location>
    <ligand>
        <name>ATP</name>
        <dbReference type="ChEBI" id="CHEBI:30616"/>
    </ligand>
</feature>
<feature type="binding site" evidence="1">
    <location>
        <position position="152"/>
    </location>
    <ligand>
        <name>ATP</name>
        <dbReference type="ChEBI" id="CHEBI:30616"/>
    </ligand>
</feature>
<feature type="binding site" evidence="1">
    <location>
        <position position="153"/>
    </location>
    <ligand>
        <name>ATP</name>
        <dbReference type="ChEBI" id="CHEBI:30616"/>
    </ligand>
</feature>
<protein>
    <recommendedName>
        <fullName evidence="1">Chromosomal replication initiator protein DnaA</fullName>
    </recommendedName>
</protein>
<comment type="function">
    <text evidence="1">Plays an essential role in the initiation and regulation of chromosomal replication. ATP-DnaA binds to the origin of replication (oriC) to initiate formation of the DNA replication initiation complex once per cell cycle. Binds the DnaA box (a 9 base pair repeat at the origin) and separates the double-stranded (ds)DNA. Forms a right-handed helical filament on oriC DNA; dsDNA binds to the exterior of the filament while single-stranded (ss)DNA is stabiized in the filament's interior. The ATP-DnaA-oriC complex binds and stabilizes one strand of the AT-rich DNA unwinding element (DUE), permitting loading of DNA polymerase. After initiation quickly degrades to an ADP-DnaA complex that is not apt for DNA replication. Binds acidic phospholipids.</text>
</comment>
<comment type="subunit">
    <text evidence="1">Oligomerizes as a right-handed, spiral filament on DNA at oriC.</text>
</comment>
<comment type="subcellular location">
    <subcellularLocation>
        <location evidence="1">Cytoplasm</location>
    </subcellularLocation>
</comment>
<comment type="domain">
    <text evidence="1">Domain I is involved in oligomerization and binding regulators, domain II is flexibile and of varying length in different bacteria, domain III forms the AAA+ region, while domain IV binds dsDNA.</text>
</comment>
<comment type="similarity">
    <text evidence="1">Belongs to the DnaA family.</text>
</comment>
<organism>
    <name type="scientific">Spiroplasma citri</name>
    <dbReference type="NCBI Taxonomy" id="2133"/>
    <lineage>
        <taxon>Bacteria</taxon>
        <taxon>Bacillati</taxon>
        <taxon>Mycoplasmatota</taxon>
        <taxon>Mollicutes</taxon>
        <taxon>Entomoplasmatales</taxon>
        <taxon>Spiroplasmataceae</taxon>
        <taxon>Spiroplasma</taxon>
    </lineage>
</organism>
<proteinExistence type="inferred from homology"/>
<gene>
    <name evidence="1" type="primary">dnaA</name>
</gene>
<dbReference type="EMBL" id="Z19108">
    <property type="protein sequence ID" value="CAA79521.1"/>
    <property type="molecule type" value="Genomic_DNA"/>
</dbReference>
<dbReference type="EMBL" id="D14985">
    <property type="protein sequence ID" value="BAA03630.1"/>
    <property type="molecule type" value="Genomic_DNA"/>
</dbReference>
<dbReference type="PIR" id="S35732">
    <property type="entry name" value="S35732"/>
</dbReference>
<dbReference type="RefSeq" id="WP_071890230.1">
    <property type="nucleotide sequence ID" value="NZ_CP013197.1"/>
</dbReference>
<dbReference type="SMR" id="P34028"/>
<dbReference type="STRING" id="2133.SCITRI_001"/>
<dbReference type="GeneID" id="54237971"/>
<dbReference type="OrthoDB" id="9807019at2"/>
<dbReference type="GO" id="GO:0005737">
    <property type="term" value="C:cytoplasm"/>
    <property type="evidence" value="ECO:0007669"/>
    <property type="project" value="UniProtKB-SubCell"/>
</dbReference>
<dbReference type="GO" id="GO:0005886">
    <property type="term" value="C:plasma membrane"/>
    <property type="evidence" value="ECO:0007669"/>
    <property type="project" value="TreeGrafter"/>
</dbReference>
<dbReference type="GO" id="GO:0005524">
    <property type="term" value="F:ATP binding"/>
    <property type="evidence" value="ECO:0007669"/>
    <property type="project" value="UniProtKB-UniRule"/>
</dbReference>
<dbReference type="GO" id="GO:0016887">
    <property type="term" value="F:ATP hydrolysis activity"/>
    <property type="evidence" value="ECO:0007669"/>
    <property type="project" value="InterPro"/>
</dbReference>
<dbReference type="GO" id="GO:0003688">
    <property type="term" value="F:DNA replication origin binding"/>
    <property type="evidence" value="ECO:0007669"/>
    <property type="project" value="UniProtKB-UniRule"/>
</dbReference>
<dbReference type="GO" id="GO:0008289">
    <property type="term" value="F:lipid binding"/>
    <property type="evidence" value="ECO:0007669"/>
    <property type="project" value="UniProtKB-KW"/>
</dbReference>
<dbReference type="GO" id="GO:0006270">
    <property type="term" value="P:DNA replication initiation"/>
    <property type="evidence" value="ECO:0007669"/>
    <property type="project" value="UniProtKB-UniRule"/>
</dbReference>
<dbReference type="GO" id="GO:0006275">
    <property type="term" value="P:regulation of DNA replication"/>
    <property type="evidence" value="ECO:0007669"/>
    <property type="project" value="UniProtKB-UniRule"/>
</dbReference>
<dbReference type="CDD" id="cd00009">
    <property type="entry name" value="AAA"/>
    <property type="match status" value="1"/>
</dbReference>
<dbReference type="CDD" id="cd06571">
    <property type="entry name" value="Bac_DnaA_C"/>
    <property type="match status" value="1"/>
</dbReference>
<dbReference type="Gene3D" id="1.10.1750.10">
    <property type="match status" value="1"/>
</dbReference>
<dbReference type="Gene3D" id="1.10.8.60">
    <property type="match status" value="1"/>
</dbReference>
<dbReference type="Gene3D" id="3.30.300.180">
    <property type="match status" value="1"/>
</dbReference>
<dbReference type="Gene3D" id="3.40.50.300">
    <property type="entry name" value="P-loop containing nucleotide triphosphate hydrolases"/>
    <property type="match status" value="1"/>
</dbReference>
<dbReference type="HAMAP" id="MF_00377">
    <property type="entry name" value="DnaA_bact"/>
    <property type="match status" value="1"/>
</dbReference>
<dbReference type="InterPro" id="IPR003593">
    <property type="entry name" value="AAA+_ATPase"/>
</dbReference>
<dbReference type="InterPro" id="IPR001957">
    <property type="entry name" value="Chromosome_initiator_DnaA"/>
</dbReference>
<dbReference type="InterPro" id="IPR020591">
    <property type="entry name" value="Chromosome_initiator_DnaA-like"/>
</dbReference>
<dbReference type="InterPro" id="IPR018312">
    <property type="entry name" value="Chromosome_initiator_DnaA_CS"/>
</dbReference>
<dbReference type="InterPro" id="IPR013159">
    <property type="entry name" value="DnaA_C"/>
</dbReference>
<dbReference type="InterPro" id="IPR013317">
    <property type="entry name" value="DnaA_dom"/>
</dbReference>
<dbReference type="InterPro" id="IPR038454">
    <property type="entry name" value="DnaA_N_sf"/>
</dbReference>
<dbReference type="InterPro" id="IPR027417">
    <property type="entry name" value="P-loop_NTPase"/>
</dbReference>
<dbReference type="InterPro" id="IPR010921">
    <property type="entry name" value="Trp_repressor/repl_initiator"/>
</dbReference>
<dbReference type="NCBIfam" id="TIGR00362">
    <property type="entry name" value="DnaA"/>
    <property type="match status" value="1"/>
</dbReference>
<dbReference type="PANTHER" id="PTHR30050">
    <property type="entry name" value="CHROMOSOMAL REPLICATION INITIATOR PROTEIN DNAA"/>
    <property type="match status" value="1"/>
</dbReference>
<dbReference type="PANTHER" id="PTHR30050:SF2">
    <property type="entry name" value="CHROMOSOMAL REPLICATION INITIATOR PROTEIN DNAA"/>
    <property type="match status" value="1"/>
</dbReference>
<dbReference type="Pfam" id="PF00308">
    <property type="entry name" value="Bac_DnaA"/>
    <property type="match status" value="1"/>
</dbReference>
<dbReference type="Pfam" id="PF08299">
    <property type="entry name" value="Bac_DnaA_C"/>
    <property type="match status" value="1"/>
</dbReference>
<dbReference type="PRINTS" id="PR00051">
    <property type="entry name" value="DNAA"/>
</dbReference>
<dbReference type="SMART" id="SM00382">
    <property type="entry name" value="AAA"/>
    <property type="match status" value="1"/>
</dbReference>
<dbReference type="SMART" id="SM00760">
    <property type="entry name" value="Bac_DnaA_C"/>
    <property type="match status" value="1"/>
</dbReference>
<dbReference type="SUPFAM" id="SSF52540">
    <property type="entry name" value="P-loop containing nucleoside triphosphate hydrolases"/>
    <property type="match status" value="1"/>
</dbReference>
<dbReference type="SUPFAM" id="SSF48295">
    <property type="entry name" value="TrpR-like"/>
    <property type="match status" value="1"/>
</dbReference>
<dbReference type="PROSITE" id="PS01008">
    <property type="entry name" value="DNAA"/>
    <property type="match status" value="1"/>
</dbReference>
<reference key="1">
    <citation type="journal article" date="1994" name="Curr. Microbiol.">
        <title>Cloning and sequencing of the replication origin (oriC) of the Spiroplasma citri chromosome and construction of autonomously replicating artificial plasmids.</title>
        <authorList>
            <person name="Ye F."/>
            <person name="Renaudin J."/>
            <person name="Bove J.M."/>
            <person name="Laigret F."/>
        </authorList>
    </citation>
    <scope>NUCLEOTIDE SEQUENCE [GENOMIC DNA]</scope>
    <source>
        <strain>ATCC 27556 / NCPPB 2647 / R8A2</strain>
    </source>
</reference>
<reference key="2">
    <citation type="journal article" date="1993" name="FEMS Microbiol. Lett.">
        <title>Comparison of the conserved region in the dnaA gene from three mollicute species.</title>
        <authorList>
            <person name="Suzuki K."/>
            <person name="Miyata M."/>
            <person name="Fukumura T."/>
        </authorList>
    </citation>
    <scope>NUCLEOTIDE SEQUENCE [GENOMIC DNA] OF 147-411</scope>
    <source>
        <strain>ATCC 27556 / NCPPB 2647 / R8A2</strain>
    </source>
</reference>
<accession>P34028</accession>
<sequence length="450" mass="51537">MNTKELWIEVKEILSRDESVSPEIYNYYISDTNLYTVSDNNCLITTKSEIAIGVFEAGLNEKIKNILKKLTGIQYNISFELEKNINKQASVISKIDTLTENNNLAYYENYTFENFVRGDSNHEAMQAALAVALDLGKKWNPLFIYGDSGLGKTHLLHAIENKVNEIYKTNNRVKYLKADEFGKIAMDILNQGHEIIEAFKTSYDIYDCLLIDDIQLLAKRNKTNELFFHIFNSYIEKNKQIVITSDKYPDDLGGFEARIISRFSYGLSIGLDSPDFETALKILEQKLKHQNNLGLFSEESLEFIALNFNSDVRKLEGAIKRLLFLAVMNKKPNEIITLADVEKAFKNAPLQNNEKITPKKIKQIVADSYNITIKAMMSKSRVSNVMQARQLAMYFCRTLLDEPFTRIGTEFGGKDHTTVMNSVKKVEAHISTNKEFKHLVNAIRRKIEGR</sequence>